<comment type="function">
    <text>Removes C-terminal D-alanyl residues from sugar-peptide cell wall precursors.</text>
</comment>
<comment type="catalytic activity">
    <reaction>
        <text>Preferential cleavage: (Ac)2-L-Lys-D-Ala-|-D-Ala. Also transpeptidation of peptidyl-alanyl moieties that are N-acyl substituents of D-alanine.</text>
        <dbReference type="EC" id="3.4.16.4"/>
    </reaction>
</comment>
<comment type="pathway">
    <text>Cell wall biogenesis; peptidoglycan biosynthesis.</text>
</comment>
<comment type="subcellular location">
    <subcellularLocation>
        <location>Secreted</location>
        <location>Cell wall</location>
    </subcellularLocation>
    <subcellularLocation>
        <location evidence="3 4">Cell membrane</location>
    </subcellularLocation>
    <subcellularLocation>
        <location evidence="3 4 5">Membrane raft</location>
    </subcellularLocation>
    <text evidence="3 4 5">Present in detergent-resistant membrane (DRM) fractions that may be equivalent to eukaryotic membrane rafts; these rafts include proteins involved in signaling, molecule trafficking and protein secretion.</text>
</comment>
<comment type="similarity">
    <text evidence="7">Belongs to the peptidase S11 family.</text>
</comment>
<sequence length="443" mass="48636">MNIKKCKQLLMSLVVLTLAVTCLAPMSKAKAASDPIDINASAAIMIEASSGKILYSKNADKRLPIASMTKMMTEYLLLEAIDQGKVKWDQTYTPDDYVYEISQDNSLSNVPLRKDGKYTVKELYQATAIYSANAAAIAIAEIVAGSETKFVEKMNAKAKELGLTDYKFVNATGLENKDLHGHQPEGTSVNEESEVSAKDMAVLADHLITDYPEILETSSIAKTKFREGTDDEMDMPNWNFMLKGLVSEYKKATVDGLKTGSTDSAGSCFTGTAERNGMRVITVVLNAKGNLHTGRFDETKKMFDYAFDNFSMKEIYAEGDQVKGHKTISVDKGKEKEVGIVTNKAFSLPVKNGEEKNYKAKVTLNKDNLTAPVKKGTKVGKLTAEYTGDEKDYGFLNSDLAGVDLVTKENVEKANWFVLTMRSIGGFFAGIWGSIVDTVTGWF</sequence>
<reference key="1">
    <citation type="journal article" date="1994" name="DNA Res.">
        <title>Systematic sequencing of the 180 kilobase region of the Bacillus subtilis chromosome containing the replication origin.</title>
        <authorList>
            <person name="Ogasawara N."/>
            <person name="Nakai S."/>
            <person name="Yoshikawa H."/>
        </authorList>
    </citation>
    <scope>NUCLEOTIDE SEQUENCE [GENOMIC DNA]</scope>
    <source>
        <strain>168</strain>
    </source>
</reference>
<reference key="2">
    <citation type="journal article" date="1997" name="Nature">
        <title>The complete genome sequence of the Gram-positive bacterium Bacillus subtilis.</title>
        <authorList>
            <person name="Kunst F."/>
            <person name="Ogasawara N."/>
            <person name="Moszer I."/>
            <person name="Albertini A.M."/>
            <person name="Alloni G."/>
            <person name="Azevedo V."/>
            <person name="Bertero M.G."/>
            <person name="Bessieres P."/>
            <person name="Bolotin A."/>
            <person name="Borchert S."/>
            <person name="Borriss R."/>
            <person name="Boursier L."/>
            <person name="Brans A."/>
            <person name="Braun M."/>
            <person name="Brignell S.C."/>
            <person name="Bron S."/>
            <person name="Brouillet S."/>
            <person name="Bruschi C.V."/>
            <person name="Caldwell B."/>
            <person name="Capuano V."/>
            <person name="Carter N.M."/>
            <person name="Choi S.-K."/>
            <person name="Codani J.-J."/>
            <person name="Connerton I.F."/>
            <person name="Cummings N.J."/>
            <person name="Daniel R.A."/>
            <person name="Denizot F."/>
            <person name="Devine K.M."/>
            <person name="Duesterhoeft A."/>
            <person name="Ehrlich S.D."/>
            <person name="Emmerson P.T."/>
            <person name="Entian K.-D."/>
            <person name="Errington J."/>
            <person name="Fabret C."/>
            <person name="Ferrari E."/>
            <person name="Foulger D."/>
            <person name="Fritz C."/>
            <person name="Fujita M."/>
            <person name="Fujita Y."/>
            <person name="Fuma S."/>
            <person name="Galizzi A."/>
            <person name="Galleron N."/>
            <person name="Ghim S.-Y."/>
            <person name="Glaser P."/>
            <person name="Goffeau A."/>
            <person name="Golightly E.J."/>
            <person name="Grandi G."/>
            <person name="Guiseppi G."/>
            <person name="Guy B.J."/>
            <person name="Haga K."/>
            <person name="Haiech J."/>
            <person name="Harwood C.R."/>
            <person name="Henaut A."/>
            <person name="Hilbert H."/>
            <person name="Holsappel S."/>
            <person name="Hosono S."/>
            <person name="Hullo M.-F."/>
            <person name="Itaya M."/>
            <person name="Jones L.-M."/>
            <person name="Joris B."/>
            <person name="Karamata D."/>
            <person name="Kasahara Y."/>
            <person name="Klaerr-Blanchard M."/>
            <person name="Klein C."/>
            <person name="Kobayashi Y."/>
            <person name="Koetter P."/>
            <person name="Koningstein G."/>
            <person name="Krogh S."/>
            <person name="Kumano M."/>
            <person name="Kurita K."/>
            <person name="Lapidus A."/>
            <person name="Lardinois S."/>
            <person name="Lauber J."/>
            <person name="Lazarevic V."/>
            <person name="Lee S.-M."/>
            <person name="Levine A."/>
            <person name="Liu H."/>
            <person name="Masuda S."/>
            <person name="Mauel C."/>
            <person name="Medigue C."/>
            <person name="Medina N."/>
            <person name="Mellado R.P."/>
            <person name="Mizuno M."/>
            <person name="Moestl D."/>
            <person name="Nakai S."/>
            <person name="Noback M."/>
            <person name="Noone D."/>
            <person name="O'Reilly M."/>
            <person name="Ogawa K."/>
            <person name="Ogiwara A."/>
            <person name="Oudega B."/>
            <person name="Park S.-H."/>
            <person name="Parro V."/>
            <person name="Pohl T.M."/>
            <person name="Portetelle D."/>
            <person name="Porwollik S."/>
            <person name="Prescott A.M."/>
            <person name="Presecan E."/>
            <person name="Pujic P."/>
            <person name="Purnelle B."/>
            <person name="Rapoport G."/>
            <person name="Rey M."/>
            <person name="Reynolds S."/>
            <person name="Rieger M."/>
            <person name="Rivolta C."/>
            <person name="Rocha E."/>
            <person name="Roche B."/>
            <person name="Rose M."/>
            <person name="Sadaie Y."/>
            <person name="Sato T."/>
            <person name="Scanlan E."/>
            <person name="Schleich S."/>
            <person name="Schroeter R."/>
            <person name="Scoffone F."/>
            <person name="Sekiguchi J."/>
            <person name="Sekowska A."/>
            <person name="Seror S.J."/>
            <person name="Serror P."/>
            <person name="Shin B.-S."/>
            <person name="Soldo B."/>
            <person name="Sorokin A."/>
            <person name="Tacconi E."/>
            <person name="Takagi T."/>
            <person name="Takahashi H."/>
            <person name="Takemaru K."/>
            <person name="Takeuchi M."/>
            <person name="Tamakoshi A."/>
            <person name="Tanaka T."/>
            <person name="Terpstra P."/>
            <person name="Tognoni A."/>
            <person name="Tosato V."/>
            <person name="Uchiyama S."/>
            <person name="Vandenbol M."/>
            <person name="Vannier F."/>
            <person name="Vassarotti A."/>
            <person name="Viari A."/>
            <person name="Wambutt R."/>
            <person name="Wedler E."/>
            <person name="Wedler H."/>
            <person name="Weitzenegger T."/>
            <person name="Winters P."/>
            <person name="Wipat A."/>
            <person name="Yamamoto H."/>
            <person name="Yamane K."/>
            <person name="Yasumoto K."/>
            <person name="Yata K."/>
            <person name="Yoshida K."/>
            <person name="Yoshikawa H.-F."/>
            <person name="Zumstein E."/>
            <person name="Yoshikawa H."/>
            <person name="Danchin A."/>
        </authorList>
    </citation>
    <scope>NUCLEOTIDE SEQUENCE [LARGE SCALE GENOMIC DNA]</scope>
    <source>
        <strain>168</strain>
    </source>
</reference>
<reference key="3">
    <citation type="journal article" date="1980" name="J. Biol. Chem.">
        <title>Sequence of active site peptides from the penicillin-sensitive D-alanine carboxypeptidase of Bacillus subtilis. Mechanism of penicillin action and sequence homology to beta-lactamases.</title>
        <authorList>
            <person name="Waxman D.J."/>
            <person name="Strominger J.L."/>
        </authorList>
    </citation>
    <scope>PROTEIN SEQUENCE OF 32-102</scope>
</reference>
<reference key="4">
    <citation type="journal article" date="1986" name="J. Bacteriol.">
        <title>Reduced heat resistance of mutant spores after cloning and mutagenesis of the Bacillus subtilis gene encoding penicillin-binding protein 5.</title>
        <authorList>
            <person name="Todd J.A."/>
            <person name="Roberts A.N."/>
            <person name="Johnstone K."/>
            <person name="Piggot P.J."/>
            <person name="Winter G."/>
            <person name="Ellar D.J."/>
        </authorList>
    </citation>
    <scope>NUCLEOTIDE SEQUENCE [GENOMIC DNA] OF 103-443</scope>
</reference>
<reference key="5">
    <citation type="journal article" date="1981" name="J. Biol. Chem.">
        <title>Primary structure of the COOH-terminal membranous segment of a penicillin-sensitive enzyme purified from two Bacilli.</title>
        <authorList>
            <person name="Waxman D.J."/>
            <person name="Strominger J.L."/>
        </authorList>
    </citation>
    <scope>PROTEIN SEQUENCE OF 414-443</scope>
</reference>
<reference key="6">
    <citation type="journal article" date="1979" name="Proc. Natl. Acad. Sci. U.S.A.">
        <title>Mechanism of penicillin action: penicillin and substrate bind covalently to the same active site serine in two bacterial D-alanine carboxypeptidases.</title>
        <authorList>
            <person name="Yocum R.R."/>
            <person name="Waxman D.J."/>
            <person name="Rasmussen J.R."/>
            <person name="Strominger J.L."/>
        </authorList>
    </citation>
    <scope>ACTIVE SITE SER-67</scope>
</reference>
<reference key="7">
    <citation type="journal article" date="2010" name="Genes Dev.">
        <title>Functional microdomains in bacterial membranes.</title>
        <authorList>
            <person name="Lopez D."/>
            <person name="Kolter R."/>
        </authorList>
    </citation>
    <scope>SUBCELLULAR LOCATION</scope>
    <source>
        <strain>168 / Marburg / ATCC 6051 / DSM 10 / JCM 1465 / NBRC 13719 / NCIMB 3610 / NRRL NRS-744 / VKM B-501</strain>
    </source>
</reference>
<reference key="8">
    <citation type="journal article" date="2012" name="Mol. Microbiol.">
        <title>The biofilm formation defect of a Bacillus subtilis flotillin-defective mutant involves the protease FtsH.</title>
        <authorList>
            <person name="Yepes A."/>
            <person name="Schneider J."/>
            <person name="Mielich B."/>
            <person name="Koch G."/>
            <person name="Garcia-Betancur J.C."/>
            <person name="Ramamurthi K.S."/>
            <person name="Vlamakis H."/>
            <person name="Lopez D."/>
        </authorList>
    </citation>
    <scope>SUBCELLULAR LOCATION</scope>
    <source>
        <strain>168 / Marburg / ATCC 6051 / DSM 10 / JCM 1465 / NBRC 13719 / NCIMB 3610 / NRRL NRS-744 / VKM B-501</strain>
    </source>
</reference>
<reference key="9">
    <citation type="journal article" date="2013" name="Mol. Microbiol.">
        <title>Flotillins functionally organize the bacterial membrane.</title>
        <authorList>
            <person name="Bach J.N."/>
            <person name="Bramkamp M."/>
        </authorList>
    </citation>
    <scope>INTERACTION WITH FLOT</scope>
    <scope>SUBCELLULAR LOCATION</scope>
    <source>
        <strain>168</strain>
    </source>
</reference>
<keyword id="KW-0121">Carboxypeptidase</keyword>
<keyword id="KW-1003">Cell membrane</keyword>
<keyword id="KW-0133">Cell shape</keyword>
<keyword id="KW-0134">Cell wall</keyword>
<keyword id="KW-0961">Cell wall biogenesis/degradation</keyword>
<keyword id="KW-0903">Direct protein sequencing</keyword>
<keyword id="KW-0378">Hydrolase</keyword>
<keyword id="KW-0472">Membrane</keyword>
<keyword id="KW-0573">Peptidoglycan synthesis</keyword>
<keyword id="KW-0645">Protease</keyword>
<keyword id="KW-1185">Reference proteome</keyword>
<keyword id="KW-0964">Secreted</keyword>
<keyword id="KW-0732">Signal</keyword>
<gene>
    <name type="primary">dacA</name>
    <name type="ordered locus">BSU00100</name>
</gene>
<proteinExistence type="evidence at protein level"/>
<name>DACA_BACSU</name>
<organism>
    <name type="scientific">Bacillus subtilis (strain 168)</name>
    <dbReference type="NCBI Taxonomy" id="224308"/>
    <lineage>
        <taxon>Bacteria</taxon>
        <taxon>Bacillati</taxon>
        <taxon>Bacillota</taxon>
        <taxon>Bacilli</taxon>
        <taxon>Bacillales</taxon>
        <taxon>Bacillaceae</taxon>
        <taxon>Bacillus</taxon>
    </lineage>
</organism>
<dbReference type="EC" id="3.4.16.4"/>
<dbReference type="EMBL" id="D26185">
    <property type="protein sequence ID" value="BAA05246.1"/>
    <property type="molecule type" value="Genomic_DNA"/>
</dbReference>
<dbReference type="EMBL" id="AL009126">
    <property type="protein sequence ID" value="CAB11786.1"/>
    <property type="molecule type" value="Genomic_DNA"/>
</dbReference>
<dbReference type="EMBL" id="M13766">
    <property type="protein sequence ID" value="AAA22375.1"/>
    <property type="molecule type" value="Genomic_DNA"/>
</dbReference>
<dbReference type="PIR" id="S66040">
    <property type="entry name" value="S66040"/>
</dbReference>
<dbReference type="RefSeq" id="NP_387891.1">
    <property type="nucleotide sequence ID" value="NC_000964.3"/>
</dbReference>
<dbReference type="RefSeq" id="WP_009966224.1">
    <property type="nucleotide sequence ID" value="NZ_OZ025638.1"/>
</dbReference>
<dbReference type="SMR" id="P08750"/>
<dbReference type="FunCoup" id="P08750">
    <property type="interactions" value="141"/>
</dbReference>
<dbReference type="STRING" id="224308.BSU00100"/>
<dbReference type="BindingDB" id="P08750"/>
<dbReference type="ChEMBL" id="CHEMBL3112381"/>
<dbReference type="MEROPS" id="S11.001"/>
<dbReference type="jPOST" id="P08750"/>
<dbReference type="PaxDb" id="224308-BSU00100"/>
<dbReference type="EnsemblBacteria" id="CAB11786">
    <property type="protein sequence ID" value="CAB11786"/>
    <property type="gene ID" value="BSU_00100"/>
</dbReference>
<dbReference type="GeneID" id="940000"/>
<dbReference type="KEGG" id="bsu:BSU00100"/>
<dbReference type="PATRIC" id="fig|224308.179.peg.10"/>
<dbReference type="eggNOG" id="COG1686">
    <property type="taxonomic scope" value="Bacteria"/>
</dbReference>
<dbReference type="InParanoid" id="P08750"/>
<dbReference type="OrthoDB" id="9791132at2"/>
<dbReference type="PhylomeDB" id="P08750"/>
<dbReference type="BioCyc" id="BSUB:BSU00100-MONOMER"/>
<dbReference type="UniPathway" id="UPA00219"/>
<dbReference type="PRO" id="PR:P08750"/>
<dbReference type="Proteomes" id="UP000001570">
    <property type="component" value="Chromosome"/>
</dbReference>
<dbReference type="GO" id="GO:0005576">
    <property type="term" value="C:extracellular region"/>
    <property type="evidence" value="ECO:0007669"/>
    <property type="project" value="UniProtKB-KW"/>
</dbReference>
<dbReference type="GO" id="GO:0045121">
    <property type="term" value="C:membrane raft"/>
    <property type="evidence" value="ECO:0007669"/>
    <property type="project" value="UniProtKB-SubCell"/>
</dbReference>
<dbReference type="GO" id="GO:0005886">
    <property type="term" value="C:plasma membrane"/>
    <property type="evidence" value="ECO:0007669"/>
    <property type="project" value="UniProtKB-SubCell"/>
</dbReference>
<dbReference type="GO" id="GO:0009002">
    <property type="term" value="F:serine-type D-Ala-D-Ala carboxypeptidase activity"/>
    <property type="evidence" value="ECO:0000247"/>
    <property type="project" value="CACAO"/>
</dbReference>
<dbReference type="GO" id="GO:0071555">
    <property type="term" value="P:cell wall organization"/>
    <property type="evidence" value="ECO:0007669"/>
    <property type="project" value="UniProtKB-KW"/>
</dbReference>
<dbReference type="GO" id="GO:0009252">
    <property type="term" value="P:peptidoglycan biosynthetic process"/>
    <property type="evidence" value="ECO:0007669"/>
    <property type="project" value="UniProtKB-UniPathway"/>
</dbReference>
<dbReference type="GO" id="GO:0006508">
    <property type="term" value="P:proteolysis"/>
    <property type="evidence" value="ECO:0007669"/>
    <property type="project" value="UniProtKB-KW"/>
</dbReference>
<dbReference type="GO" id="GO:0008360">
    <property type="term" value="P:regulation of cell shape"/>
    <property type="evidence" value="ECO:0007669"/>
    <property type="project" value="UniProtKB-KW"/>
</dbReference>
<dbReference type="FunFam" id="3.40.710.10:FF:000025">
    <property type="entry name" value="D-alanyl-D-alanine carboxypeptidase DacA"/>
    <property type="match status" value="1"/>
</dbReference>
<dbReference type="Gene3D" id="2.60.410.10">
    <property type="entry name" value="D-Ala-D-Ala carboxypeptidase, C-terminal domain"/>
    <property type="match status" value="1"/>
</dbReference>
<dbReference type="Gene3D" id="3.40.710.10">
    <property type="entry name" value="DD-peptidase/beta-lactamase superfamily"/>
    <property type="match status" value="1"/>
</dbReference>
<dbReference type="InterPro" id="IPR012338">
    <property type="entry name" value="Beta-lactam/transpept-like"/>
</dbReference>
<dbReference type="InterPro" id="IPR015956">
    <property type="entry name" value="Peniciliin-bd_prot_C_sf"/>
</dbReference>
<dbReference type="InterPro" id="IPR018044">
    <property type="entry name" value="Peptidase_S11"/>
</dbReference>
<dbReference type="InterPro" id="IPR012907">
    <property type="entry name" value="Peptidase_S11_C"/>
</dbReference>
<dbReference type="InterPro" id="IPR037167">
    <property type="entry name" value="Peptidase_S11_C_sf"/>
</dbReference>
<dbReference type="InterPro" id="IPR001967">
    <property type="entry name" value="Peptidase_S11_N"/>
</dbReference>
<dbReference type="PANTHER" id="PTHR21581">
    <property type="entry name" value="D-ALANYL-D-ALANINE CARBOXYPEPTIDASE"/>
    <property type="match status" value="1"/>
</dbReference>
<dbReference type="PANTHER" id="PTHR21581:SF11">
    <property type="entry name" value="D-ALANYL-D-ALANINE CARBOXYPEPTIDASE DACA"/>
    <property type="match status" value="1"/>
</dbReference>
<dbReference type="Pfam" id="PF07943">
    <property type="entry name" value="PBP5_C"/>
    <property type="match status" value="1"/>
</dbReference>
<dbReference type="Pfam" id="PF00768">
    <property type="entry name" value="Peptidase_S11"/>
    <property type="match status" value="1"/>
</dbReference>
<dbReference type="PRINTS" id="PR00725">
    <property type="entry name" value="DADACBPTASE1"/>
</dbReference>
<dbReference type="SMART" id="SM00936">
    <property type="entry name" value="PBP5_C"/>
    <property type="match status" value="1"/>
</dbReference>
<dbReference type="SUPFAM" id="SSF56601">
    <property type="entry name" value="beta-lactamase/transpeptidase-like"/>
    <property type="match status" value="1"/>
</dbReference>
<dbReference type="SUPFAM" id="SSF69189">
    <property type="entry name" value="Penicillin-binding protein associated domain"/>
    <property type="match status" value="1"/>
</dbReference>
<feature type="signal peptide" evidence="6">
    <location>
        <begin position="1"/>
        <end position="31"/>
    </location>
</feature>
<feature type="chain" id="PRO_0000027228" description="D-alanyl-D-alanine carboxypeptidase DacA">
    <location>
        <begin position="32"/>
        <end position="443"/>
    </location>
</feature>
<feature type="active site" description="Acyl-ester intermediate" evidence="2">
    <location>
        <position position="67"/>
    </location>
</feature>
<feature type="active site" description="Proton acceptor" evidence="1">
    <location>
        <position position="70"/>
    </location>
</feature>
<feature type="active site" evidence="1">
    <location>
        <position position="131"/>
    </location>
</feature>
<feature type="binding site" evidence="1">
    <location>
        <position position="258"/>
    </location>
    <ligand>
        <name>substrate</name>
    </ligand>
</feature>
<feature type="sequence conflict" description="In Ref. 3; AA sequence." evidence="7" ref="3">
    <original>E</original>
    <variation>Q</variation>
    <location>
        <position position="100"/>
    </location>
</feature>
<feature type="sequence conflict" description="In Ref. 4; AAA22375." evidence="7" ref="4">
    <original>E</original>
    <variation>Q</variation>
    <location>
        <position position="227"/>
    </location>
</feature>
<accession>P08750</accession>
<evidence type="ECO:0000250" key="1"/>
<evidence type="ECO:0000269" key="2">
    <source>
    </source>
</evidence>
<evidence type="ECO:0000269" key="3">
    <source>
    </source>
</evidence>
<evidence type="ECO:0000269" key="4">
    <source>
    </source>
</evidence>
<evidence type="ECO:0000269" key="5">
    <source>
    </source>
</evidence>
<evidence type="ECO:0000269" key="6">
    <source>
    </source>
</evidence>
<evidence type="ECO:0000305" key="7"/>
<protein>
    <recommendedName>
        <fullName>D-alanyl-D-alanine carboxypeptidase DacA</fullName>
        <shortName>CPase</shortName>
        <shortName>DD-carboxypeptidase</shortName>
        <shortName>DD-peptidase</shortName>
        <ecNumber>3.4.16.4</ecNumber>
    </recommendedName>
    <alternativeName>
        <fullName>Penicillin-binding protein 5</fullName>
        <shortName>PBP-5</shortName>
    </alternativeName>
</protein>